<evidence type="ECO:0000255" key="1">
    <source>
        <dbReference type="HAMAP-Rule" id="MF_00270"/>
    </source>
</evidence>
<evidence type="ECO:0000305" key="2"/>
<feature type="chain" id="PRO_0000345445" description="Small ribosomal subunit protein bS18">
    <location>
        <begin position="1"/>
        <end position="80"/>
    </location>
</feature>
<dbReference type="EMBL" id="CP001016">
    <property type="protein sequence ID" value="ACB95917.1"/>
    <property type="molecule type" value="Genomic_DNA"/>
</dbReference>
<dbReference type="RefSeq" id="WP_012385270.1">
    <property type="nucleotide sequence ID" value="NC_010581.1"/>
</dbReference>
<dbReference type="SMR" id="B2IHD2"/>
<dbReference type="STRING" id="395963.Bind_2304"/>
<dbReference type="KEGG" id="bid:Bind_2304"/>
<dbReference type="eggNOG" id="COG0238">
    <property type="taxonomic scope" value="Bacteria"/>
</dbReference>
<dbReference type="HOGENOM" id="CLU_148710_2_3_5"/>
<dbReference type="OrthoDB" id="9812008at2"/>
<dbReference type="Proteomes" id="UP000001695">
    <property type="component" value="Chromosome"/>
</dbReference>
<dbReference type="GO" id="GO:0022627">
    <property type="term" value="C:cytosolic small ribosomal subunit"/>
    <property type="evidence" value="ECO:0007669"/>
    <property type="project" value="TreeGrafter"/>
</dbReference>
<dbReference type="GO" id="GO:0070181">
    <property type="term" value="F:small ribosomal subunit rRNA binding"/>
    <property type="evidence" value="ECO:0007669"/>
    <property type="project" value="TreeGrafter"/>
</dbReference>
<dbReference type="GO" id="GO:0003735">
    <property type="term" value="F:structural constituent of ribosome"/>
    <property type="evidence" value="ECO:0007669"/>
    <property type="project" value="InterPro"/>
</dbReference>
<dbReference type="GO" id="GO:0006412">
    <property type="term" value="P:translation"/>
    <property type="evidence" value="ECO:0007669"/>
    <property type="project" value="UniProtKB-UniRule"/>
</dbReference>
<dbReference type="Gene3D" id="4.10.640.10">
    <property type="entry name" value="Ribosomal protein S18"/>
    <property type="match status" value="1"/>
</dbReference>
<dbReference type="HAMAP" id="MF_00270">
    <property type="entry name" value="Ribosomal_bS18"/>
    <property type="match status" value="1"/>
</dbReference>
<dbReference type="InterPro" id="IPR001648">
    <property type="entry name" value="Ribosomal_bS18"/>
</dbReference>
<dbReference type="InterPro" id="IPR018275">
    <property type="entry name" value="Ribosomal_bS18_CS"/>
</dbReference>
<dbReference type="InterPro" id="IPR036870">
    <property type="entry name" value="Ribosomal_bS18_sf"/>
</dbReference>
<dbReference type="NCBIfam" id="TIGR00165">
    <property type="entry name" value="S18"/>
    <property type="match status" value="1"/>
</dbReference>
<dbReference type="PANTHER" id="PTHR13479">
    <property type="entry name" value="30S RIBOSOMAL PROTEIN S18"/>
    <property type="match status" value="1"/>
</dbReference>
<dbReference type="PANTHER" id="PTHR13479:SF40">
    <property type="entry name" value="SMALL RIBOSOMAL SUBUNIT PROTEIN BS18M"/>
    <property type="match status" value="1"/>
</dbReference>
<dbReference type="Pfam" id="PF01084">
    <property type="entry name" value="Ribosomal_S18"/>
    <property type="match status" value="1"/>
</dbReference>
<dbReference type="PRINTS" id="PR00974">
    <property type="entry name" value="RIBOSOMALS18"/>
</dbReference>
<dbReference type="SUPFAM" id="SSF46911">
    <property type="entry name" value="Ribosomal protein S18"/>
    <property type="match status" value="1"/>
</dbReference>
<dbReference type="PROSITE" id="PS00057">
    <property type="entry name" value="RIBOSOMAL_S18"/>
    <property type="match status" value="1"/>
</dbReference>
<proteinExistence type="inferred from homology"/>
<name>RS18_BEII9</name>
<organism>
    <name type="scientific">Beijerinckia indica subsp. indica (strain ATCC 9039 / DSM 1715 / NCIMB 8712)</name>
    <dbReference type="NCBI Taxonomy" id="395963"/>
    <lineage>
        <taxon>Bacteria</taxon>
        <taxon>Pseudomonadati</taxon>
        <taxon>Pseudomonadota</taxon>
        <taxon>Alphaproteobacteria</taxon>
        <taxon>Hyphomicrobiales</taxon>
        <taxon>Beijerinckiaceae</taxon>
        <taxon>Beijerinckia</taxon>
    </lineage>
</organism>
<reference key="1">
    <citation type="journal article" date="2010" name="J. Bacteriol.">
        <title>Complete genome sequence of Beijerinckia indica subsp. indica.</title>
        <authorList>
            <person name="Tamas I."/>
            <person name="Dedysh S.N."/>
            <person name="Liesack W."/>
            <person name="Stott M.B."/>
            <person name="Alam M."/>
            <person name="Murrell J.C."/>
            <person name="Dunfield P.F."/>
        </authorList>
    </citation>
    <scope>NUCLEOTIDE SEQUENCE [LARGE SCALE GENOMIC DNA]</scope>
    <source>
        <strain>ATCC 9039 / DSM 1715 / NCIMB 8712</strain>
    </source>
</reference>
<gene>
    <name evidence="1" type="primary">rpsR</name>
    <name type="ordered locus">Bind_2304</name>
</gene>
<sequence length="80" mass="9230">MTTPAAPRRPFFRRRKTCPFSGPNAPKIDYKDTRLLSRYISERGKIVPSRITAVSAKKQRELAQAIKRARFLGLLPYVIR</sequence>
<comment type="function">
    <text evidence="1">Binds as a heterodimer with protein bS6 to the central domain of the 16S rRNA, where it helps stabilize the platform of the 30S subunit.</text>
</comment>
<comment type="subunit">
    <text evidence="1">Part of the 30S ribosomal subunit. Forms a tight heterodimer with protein bS6.</text>
</comment>
<comment type="similarity">
    <text evidence="1">Belongs to the bacterial ribosomal protein bS18 family.</text>
</comment>
<accession>B2IHD2</accession>
<protein>
    <recommendedName>
        <fullName evidence="1">Small ribosomal subunit protein bS18</fullName>
    </recommendedName>
    <alternativeName>
        <fullName evidence="2">30S ribosomal protein S18</fullName>
    </alternativeName>
</protein>
<keyword id="KW-1185">Reference proteome</keyword>
<keyword id="KW-0687">Ribonucleoprotein</keyword>
<keyword id="KW-0689">Ribosomal protein</keyword>
<keyword id="KW-0694">RNA-binding</keyword>
<keyword id="KW-0699">rRNA-binding</keyword>